<accession>Q6IQS6</accession>
<protein>
    <recommendedName>
        <fullName>SUMO-activating enzyme subunit 1</fullName>
    </recommendedName>
    <alternativeName>
        <fullName>Ubiquitin-like 1-activating enzyme E1A</fullName>
    </alternativeName>
</protein>
<proteinExistence type="evidence at transcript level"/>
<reference key="1">
    <citation type="submission" date="2004-06" db="EMBL/GenBank/DDBJ databases">
        <authorList>
            <consortium name="NIH - Zebrafish Gene Collection (ZGC) project"/>
        </authorList>
    </citation>
    <scope>NUCLEOTIDE SEQUENCE [LARGE SCALE MRNA]</scope>
    <source>
        <tissue>Embryo</tissue>
    </source>
</reference>
<dbReference type="EMBL" id="BC071328">
    <property type="protein sequence ID" value="AAH71328.1"/>
    <property type="molecule type" value="mRNA"/>
</dbReference>
<dbReference type="RefSeq" id="NP_001002058.1">
    <property type="nucleotide sequence ID" value="NM_001002058.1"/>
</dbReference>
<dbReference type="SMR" id="Q6IQS6"/>
<dbReference type="BioGRID" id="91577">
    <property type="interactions" value="1"/>
</dbReference>
<dbReference type="FunCoup" id="Q6IQS6">
    <property type="interactions" value="2700"/>
</dbReference>
<dbReference type="STRING" id="7955.ENSDARP00000016138"/>
<dbReference type="PaxDb" id="7955-ENSDARP00000016138"/>
<dbReference type="Ensembl" id="ENSDART00000011447">
    <property type="protein sequence ID" value="ENSDARP00000016138"/>
    <property type="gene ID" value="ENSDARG00000010487"/>
</dbReference>
<dbReference type="GeneID" id="415148"/>
<dbReference type="KEGG" id="dre:415148"/>
<dbReference type="AGR" id="ZFIN:ZDB-GENE-040625-21"/>
<dbReference type="CTD" id="10055"/>
<dbReference type="ZFIN" id="ZDB-GENE-040625-21">
    <property type="gene designation" value="sae1"/>
</dbReference>
<dbReference type="eggNOG" id="KOG2014">
    <property type="taxonomic scope" value="Eukaryota"/>
</dbReference>
<dbReference type="HOGENOM" id="CLU_002556_4_0_1"/>
<dbReference type="InParanoid" id="Q6IQS6"/>
<dbReference type="OMA" id="EFFGQFD"/>
<dbReference type="OrthoDB" id="412647at2759"/>
<dbReference type="PhylomeDB" id="Q6IQS6"/>
<dbReference type="TreeFam" id="TF315037"/>
<dbReference type="Reactome" id="R-DRE-3065676">
    <property type="pathway name" value="SUMO is conjugated to E1 (UBA2:SAE1)"/>
</dbReference>
<dbReference type="Reactome" id="R-DRE-3065678">
    <property type="pathway name" value="SUMO is transferred from E1 to E2 (UBE2I, UBC9)"/>
</dbReference>
<dbReference type="UniPathway" id="UPA00886"/>
<dbReference type="PRO" id="PR:Q6IQS6"/>
<dbReference type="Proteomes" id="UP000000437">
    <property type="component" value="Chromosome 15"/>
</dbReference>
<dbReference type="Bgee" id="ENSDARG00000010487">
    <property type="expression patterns" value="Expressed in gastrula and 26 other cell types or tissues"/>
</dbReference>
<dbReference type="GO" id="GO:0005737">
    <property type="term" value="C:cytoplasm"/>
    <property type="evidence" value="ECO:0000318"/>
    <property type="project" value="GO_Central"/>
</dbReference>
<dbReference type="GO" id="GO:0031510">
    <property type="term" value="C:SUMO activating enzyme complex"/>
    <property type="evidence" value="ECO:0000250"/>
    <property type="project" value="UniProtKB"/>
</dbReference>
<dbReference type="GO" id="GO:0019948">
    <property type="term" value="F:SUMO activating enzyme activity"/>
    <property type="evidence" value="ECO:0000318"/>
    <property type="project" value="GO_Central"/>
</dbReference>
<dbReference type="GO" id="GO:0060216">
    <property type="term" value="P:definitive hemopoiesis"/>
    <property type="evidence" value="ECO:0000315"/>
    <property type="project" value="ZFIN"/>
</dbReference>
<dbReference type="GO" id="GO:0061484">
    <property type="term" value="P:hematopoietic stem cell homeostasis"/>
    <property type="evidence" value="ECO:0000315"/>
    <property type="project" value="ZFIN"/>
</dbReference>
<dbReference type="GO" id="GO:0016925">
    <property type="term" value="P:protein sumoylation"/>
    <property type="evidence" value="ECO:0000315"/>
    <property type="project" value="ZFIN"/>
</dbReference>
<dbReference type="CDD" id="cd01492">
    <property type="entry name" value="Aos1_SUMO"/>
    <property type="match status" value="1"/>
</dbReference>
<dbReference type="FunFam" id="3.40.50.720:FF:000274">
    <property type="entry name" value="SUMO-activating enzyme subunit 1 isoform X1"/>
    <property type="match status" value="1"/>
</dbReference>
<dbReference type="Gene3D" id="3.40.50.720">
    <property type="entry name" value="NAD(P)-binding Rossmann-like Domain"/>
    <property type="match status" value="1"/>
</dbReference>
<dbReference type="InterPro" id="IPR045886">
    <property type="entry name" value="ThiF/MoeB/HesA"/>
</dbReference>
<dbReference type="InterPro" id="IPR000594">
    <property type="entry name" value="ThiF_NAD_FAD-bd"/>
</dbReference>
<dbReference type="InterPro" id="IPR035985">
    <property type="entry name" value="Ubiquitin-activating_enz"/>
</dbReference>
<dbReference type="InterPro" id="IPR000011">
    <property type="entry name" value="UBQ/SUMO-activ_enz_E1-like"/>
</dbReference>
<dbReference type="PANTHER" id="PTHR10953:SF162">
    <property type="entry name" value="SUMO-ACTIVATING ENZYME SUBUNIT 1"/>
    <property type="match status" value="1"/>
</dbReference>
<dbReference type="PANTHER" id="PTHR10953">
    <property type="entry name" value="UBIQUITIN-ACTIVATING ENZYME E1"/>
    <property type="match status" value="1"/>
</dbReference>
<dbReference type="Pfam" id="PF00899">
    <property type="entry name" value="ThiF"/>
    <property type="match status" value="1"/>
</dbReference>
<dbReference type="PRINTS" id="PR01849">
    <property type="entry name" value="UBIQUITINACT"/>
</dbReference>
<dbReference type="SUPFAM" id="SSF69572">
    <property type="entry name" value="Activating enzymes of the ubiquitin-like proteins"/>
    <property type="match status" value="1"/>
</dbReference>
<feature type="chain" id="PRO_0000268869" description="SUMO-activating enzyme subunit 1">
    <location>
        <begin position="1"/>
        <end position="348"/>
    </location>
</feature>
<comment type="function">
    <text evidence="1">The heterodimer acts as an E1 ligase for sumo1, sumo2, and sumo3. It mediates ATP-dependent activation of sumo proteins followed by formation of a thioester bond between a sumo protein and a conserved active site cysteine residue on uba2/sae2 (By similarity).</text>
</comment>
<comment type="pathway">
    <text>Protein modification; protein sumoylation.</text>
</comment>
<comment type="subunit">
    <text evidence="1">Heterodimer of sae1 and uba2/sae2. The heterodimer corresponds to the two domains that are encoded on a single polypeptide chain in ubiquitin-activating enzyme E1. Interacts with ube2i (By similarity).</text>
</comment>
<comment type="subcellular location">
    <subcellularLocation>
        <location evidence="1">Nucleus</location>
    </subcellularLocation>
</comment>
<comment type="similarity">
    <text evidence="2">Belongs to the ubiquitin-activating E1 family.</text>
</comment>
<gene>
    <name type="primary">sae1</name>
    <name type="synonym">sae2a</name>
    <name type="synonym">uble1a</name>
    <name type="ORF">zgc:86633</name>
</gene>
<keyword id="KW-0436">Ligase</keyword>
<keyword id="KW-0539">Nucleus</keyword>
<keyword id="KW-1185">Reference proteome</keyword>
<keyword id="KW-0833">Ubl conjugation pathway</keyword>
<organism>
    <name type="scientific">Danio rerio</name>
    <name type="common">Zebrafish</name>
    <name type="synonym">Brachydanio rerio</name>
    <dbReference type="NCBI Taxonomy" id="7955"/>
    <lineage>
        <taxon>Eukaryota</taxon>
        <taxon>Metazoa</taxon>
        <taxon>Chordata</taxon>
        <taxon>Craniata</taxon>
        <taxon>Vertebrata</taxon>
        <taxon>Euteleostomi</taxon>
        <taxon>Actinopterygii</taxon>
        <taxon>Neopterygii</taxon>
        <taxon>Teleostei</taxon>
        <taxon>Ostariophysi</taxon>
        <taxon>Cypriniformes</taxon>
        <taxon>Danionidae</taxon>
        <taxon>Danioninae</taxon>
        <taxon>Danio</taxon>
    </lineage>
</organism>
<evidence type="ECO:0000250" key="1"/>
<evidence type="ECO:0000305" key="2"/>
<name>SAE1_DANRE</name>
<sequence>MIDTIEKEDTIISEEEAAQYDRQIRLWGLDAQKRLRGSRVLLVGLRGLGAEVAKNLILAGVKGLTLLDHEQVTEESRRAQFLIPVDADGQNHAQASLERAQFLNPMVEVKADTEPVESKPDDFFFQFDAVCLTRCSRDLMVRVDQLCASRNIKVFCGDVYGYNGYMFSDLGQEYHYVEEKPKVVKGSNEANDGPEAKKPKIDPNETTMVKKTISFCSLKEALEVDWTTEKAKSSLKRIPADYFLLQVLLKFRTDKGRDPQPDSFAEDSQLLLQIRDDVLETMGLSSDLLPNTFVSYCFSEMSPVCAVVGGVLGQEIVKALSQRDAPHRNFFFFDGLKGSGVVDYFSSK</sequence>